<feature type="chain" id="PRO_0000390439" description="Ubiquitin-conjugating enzyme E2 S">
    <location>
        <begin position="1"/>
        <end position="208"/>
    </location>
</feature>
<feature type="domain" description="UBC core" evidence="1">
    <location>
        <begin position="14"/>
        <end position="160"/>
    </location>
</feature>
<feature type="region of interest" description="Disordered" evidence="3">
    <location>
        <begin position="161"/>
        <end position="196"/>
    </location>
</feature>
<feature type="compositionally biased region" description="Basic and acidic residues" evidence="3">
    <location>
        <begin position="170"/>
        <end position="196"/>
    </location>
</feature>
<feature type="active site" description="Glycyl thioester intermediate" evidence="1 2">
    <location>
        <position position="98"/>
    </location>
</feature>
<accession>B4JKB7</accession>
<sequence>MSSQYSNVENLSPQTIRQVMKELQDMESTPPEGIKVLINESDVTDIQALIDGPAGTPYAVGIFRVKLTLSKDFPQTPPKAYFLTKIFHPNVASNGEICVNTLKKDWKPDLGIKHILLTIKCLLIVPNPESALNEEAGKMLLERYDDYSQRARMMTEIHAQPAKCGAGASDAKDDDGPSTKKHAGVDKKLQDKKKEKLLKEKKRMLKRL</sequence>
<proteinExistence type="inferred from homology"/>
<gene>
    <name type="ORF">GH12079</name>
</gene>
<keyword id="KW-0067">ATP-binding</keyword>
<keyword id="KW-0131">Cell cycle</keyword>
<keyword id="KW-0132">Cell division</keyword>
<keyword id="KW-0547">Nucleotide-binding</keyword>
<keyword id="KW-1185">Reference proteome</keyword>
<keyword id="KW-0808">Transferase</keyword>
<keyword id="KW-0833">Ubl conjugation pathway</keyword>
<reference key="1">
    <citation type="journal article" date="2007" name="Nature">
        <title>Evolution of genes and genomes on the Drosophila phylogeny.</title>
        <authorList>
            <consortium name="Drosophila 12 genomes consortium"/>
        </authorList>
    </citation>
    <scope>NUCLEOTIDE SEQUENCE [LARGE SCALE GENOMIC DNA]</scope>
    <source>
        <strain>Tucson 15287-2541.00</strain>
    </source>
</reference>
<evidence type="ECO:0000255" key="1">
    <source>
        <dbReference type="PROSITE-ProRule" id="PRU00388"/>
    </source>
</evidence>
<evidence type="ECO:0000255" key="2">
    <source>
        <dbReference type="PROSITE-ProRule" id="PRU10133"/>
    </source>
</evidence>
<evidence type="ECO:0000256" key="3">
    <source>
        <dbReference type="SAM" id="MobiDB-lite"/>
    </source>
</evidence>
<comment type="function">
    <text evidence="1">Catalyzes the covalent attachment of ubiquitin to other proteins. Acts as an essential factor of the anaphase promoting complex/cyclosome (APC/C), a cell cycle-regulated ubiquitin ligase that controls progression through mitosis. Acts by specifically elongating polyubiquitin chains initiated by the E2 enzyme vih/UbcH10 on APC/C substrates, enhancing the degradation of APC/C substrates by the proteasome and promoting mitotic exit.</text>
</comment>
<comment type="catalytic activity">
    <reaction evidence="1 2">
        <text>S-ubiquitinyl-[E1 ubiquitin-activating enzyme]-L-cysteine + [E2 ubiquitin-conjugating enzyme]-L-cysteine = [E1 ubiquitin-activating enzyme]-L-cysteine + S-ubiquitinyl-[E2 ubiquitin-conjugating enzyme]-L-cysteine.</text>
        <dbReference type="EC" id="2.3.2.23"/>
    </reaction>
</comment>
<comment type="pathway">
    <text evidence="1">Protein modification; protein ubiquitination.</text>
</comment>
<comment type="similarity">
    <text evidence="1">Belongs to the ubiquitin-conjugating enzyme family.</text>
</comment>
<dbReference type="EC" id="2.3.2.23"/>
<dbReference type="EMBL" id="CH916370">
    <property type="protein sequence ID" value="EDW00020.1"/>
    <property type="molecule type" value="Genomic_DNA"/>
</dbReference>
<dbReference type="SMR" id="B4JKB7"/>
<dbReference type="FunCoup" id="B4JKB7">
    <property type="interactions" value="1945"/>
</dbReference>
<dbReference type="STRING" id="7222.B4JKB7"/>
<dbReference type="EnsemblMetazoa" id="FBtr0147493">
    <property type="protein sequence ID" value="FBpp0145985"/>
    <property type="gene ID" value="FBgn0119558"/>
</dbReference>
<dbReference type="EnsemblMetazoa" id="XM_001991359.2">
    <property type="protein sequence ID" value="XP_001991395.1"/>
    <property type="gene ID" value="LOC6564572"/>
</dbReference>
<dbReference type="GeneID" id="6564572"/>
<dbReference type="KEGG" id="dgr:6564572"/>
<dbReference type="eggNOG" id="KOG0423">
    <property type="taxonomic scope" value="Eukaryota"/>
</dbReference>
<dbReference type="HOGENOM" id="CLU_030988_5_3_1"/>
<dbReference type="InParanoid" id="B4JKB7"/>
<dbReference type="OMA" id="QPAKCGA"/>
<dbReference type="OrthoDB" id="10069349at2759"/>
<dbReference type="PhylomeDB" id="B4JKB7"/>
<dbReference type="UniPathway" id="UPA00143"/>
<dbReference type="Proteomes" id="UP000001070">
    <property type="component" value="Unassembled WGS sequence"/>
</dbReference>
<dbReference type="GO" id="GO:0005524">
    <property type="term" value="F:ATP binding"/>
    <property type="evidence" value="ECO:0007669"/>
    <property type="project" value="UniProtKB-KW"/>
</dbReference>
<dbReference type="GO" id="GO:0061631">
    <property type="term" value="F:ubiquitin conjugating enzyme activity"/>
    <property type="evidence" value="ECO:0007669"/>
    <property type="project" value="UniProtKB-EC"/>
</dbReference>
<dbReference type="GO" id="GO:0031145">
    <property type="term" value="P:anaphase-promoting complex-dependent catabolic process"/>
    <property type="evidence" value="ECO:0000250"/>
    <property type="project" value="UniProtKB"/>
</dbReference>
<dbReference type="GO" id="GO:0051301">
    <property type="term" value="P:cell division"/>
    <property type="evidence" value="ECO:0007669"/>
    <property type="project" value="UniProtKB-KW"/>
</dbReference>
<dbReference type="GO" id="GO:0010458">
    <property type="term" value="P:exit from mitosis"/>
    <property type="evidence" value="ECO:0000250"/>
    <property type="project" value="UniProtKB"/>
</dbReference>
<dbReference type="GO" id="GO:0016567">
    <property type="term" value="P:protein ubiquitination"/>
    <property type="evidence" value="ECO:0007669"/>
    <property type="project" value="UniProtKB-UniPathway"/>
</dbReference>
<dbReference type="CDD" id="cd23804">
    <property type="entry name" value="UBCc_UBE2S"/>
    <property type="match status" value="1"/>
</dbReference>
<dbReference type="FunFam" id="3.10.110.10:FF:000034">
    <property type="entry name" value="Ubiquitin-conjugating enzyme E2 S"/>
    <property type="match status" value="1"/>
</dbReference>
<dbReference type="Gene3D" id="3.10.110.10">
    <property type="entry name" value="Ubiquitin Conjugating Enzyme"/>
    <property type="match status" value="1"/>
</dbReference>
<dbReference type="InterPro" id="IPR050113">
    <property type="entry name" value="Ub_conjugating_enzyme"/>
</dbReference>
<dbReference type="InterPro" id="IPR000608">
    <property type="entry name" value="UBQ-conjugat_E2_core"/>
</dbReference>
<dbReference type="InterPro" id="IPR023313">
    <property type="entry name" value="UBQ-conjugating_AS"/>
</dbReference>
<dbReference type="InterPro" id="IPR016135">
    <property type="entry name" value="UBQ-conjugating_enzyme/RWD"/>
</dbReference>
<dbReference type="PANTHER" id="PTHR24067">
    <property type="entry name" value="UBIQUITIN-CONJUGATING ENZYME E2"/>
    <property type="match status" value="1"/>
</dbReference>
<dbReference type="Pfam" id="PF00179">
    <property type="entry name" value="UQ_con"/>
    <property type="match status" value="1"/>
</dbReference>
<dbReference type="SMART" id="SM00212">
    <property type="entry name" value="UBCc"/>
    <property type="match status" value="1"/>
</dbReference>
<dbReference type="SUPFAM" id="SSF54495">
    <property type="entry name" value="UBC-like"/>
    <property type="match status" value="1"/>
</dbReference>
<dbReference type="PROSITE" id="PS00183">
    <property type="entry name" value="UBC_1"/>
    <property type="match status" value="1"/>
</dbReference>
<dbReference type="PROSITE" id="PS50127">
    <property type="entry name" value="UBC_2"/>
    <property type="match status" value="1"/>
</dbReference>
<protein>
    <recommendedName>
        <fullName>Ubiquitin-conjugating enzyme E2 S</fullName>
        <ecNumber>2.3.2.23</ecNumber>
    </recommendedName>
    <alternativeName>
        <fullName>E2 ubiquitin-conjugating enzyme S</fullName>
    </alternativeName>
    <alternativeName>
        <fullName>Ubiquitin carrier protein S</fullName>
    </alternativeName>
    <alternativeName>
        <fullName>Ubiquitin-protein ligase S</fullName>
    </alternativeName>
</protein>
<name>UBE2S_DROGR</name>
<organism>
    <name type="scientific">Drosophila grimshawi</name>
    <name type="common">Hawaiian fruit fly</name>
    <name type="synonym">Idiomyia grimshawi</name>
    <dbReference type="NCBI Taxonomy" id="7222"/>
    <lineage>
        <taxon>Eukaryota</taxon>
        <taxon>Metazoa</taxon>
        <taxon>Ecdysozoa</taxon>
        <taxon>Arthropoda</taxon>
        <taxon>Hexapoda</taxon>
        <taxon>Insecta</taxon>
        <taxon>Pterygota</taxon>
        <taxon>Neoptera</taxon>
        <taxon>Endopterygota</taxon>
        <taxon>Diptera</taxon>
        <taxon>Brachycera</taxon>
        <taxon>Muscomorpha</taxon>
        <taxon>Ephydroidea</taxon>
        <taxon>Drosophilidae</taxon>
        <taxon>Drosophila</taxon>
        <taxon>Hawaiian Drosophila</taxon>
    </lineage>
</organism>